<dbReference type="EC" id="1.7.2.2" evidence="1"/>
<dbReference type="EMBL" id="BA000031">
    <property type="protein sequence ID" value="BAC60192.1"/>
    <property type="molecule type" value="Genomic_DNA"/>
</dbReference>
<dbReference type="RefSeq" id="NP_798308.1">
    <property type="nucleotide sequence ID" value="NC_004603.1"/>
</dbReference>
<dbReference type="RefSeq" id="WP_005483164.1">
    <property type="nucleotide sequence ID" value="NC_004603.1"/>
</dbReference>
<dbReference type="SMR" id="Q87ND9"/>
<dbReference type="GeneID" id="1189436"/>
<dbReference type="KEGG" id="vpa:VP1929"/>
<dbReference type="PATRIC" id="fig|223926.6.peg.1844"/>
<dbReference type="eggNOG" id="COG3303">
    <property type="taxonomic scope" value="Bacteria"/>
</dbReference>
<dbReference type="HOGENOM" id="CLU_035040_1_0_6"/>
<dbReference type="UniPathway" id="UPA00653"/>
<dbReference type="Proteomes" id="UP000002493">
    <property type="component" value="Chromosome 1"/>
</dbReference>
<dbReference type="GO" id="GO:0030288">
    <property type="term" value="C:outer membrane-bounded periplasmic space"/>
    <property type="evidence" value="ECO:0007669"/>
    <property type="project" value="TreeGrafter"/>
</dbReference>
<dbReference type="GO" id="GO:0005509">
    <property type="term" value="F:calcium ion binding"/>
    <property type="evidence" value="ECO:0007669"/>
    <property type="project" value="UniProtKB-UniRule"/>
</dbReference>
<dbReference type="GO" id="GO:0020037">
    <property type="term" value="F:heme binding"/>
    <property type="evidence" value="ECO:0007669"/>
    <property type="project" value="InterPro"/>
</dbReference>
<dbReference type="GO" id="GO:0005506">
    <property type="term" value="F:iron ion binding"/>
    <property type="evidence" value="ECO:0007669"/>
    <property type="project" value="UniProtKB-UniRule"/>
</dbReference>
<dbReference type="GO" id="GO:0042279">
    <property type="term" value="F:nitrite reductase (cytochrome, ammonia-forming) activity"/>
    <property type="evidence" value="ECO:0007669"/>
    <property type="project" value="UniProtKB-UniRule"/>
</dbReference>
<dbReference type="GO" id="GO:0019645">
    <property type="term" value="P:anaerobic electron transport chain"/>
    <property type="evidence" value="ECO:0007669"/>
    <property type="project" value="TreeGrafter"/>
</dbReference>
<dbReference type="GO" id="GO:0042128">
    <property type="term" value="P:nitrate assimilation"/>
    <property type="evidence" value="ECO:0007669"/>
    <property type="project" value="UniProtKB-UniRule"/>
</dbReference>
<dbReference type="CDD" id="cd00548">
    <property type="entry name" value="NrfA-like"/>
    <property type="match status" value="1"/>
</dbReference>
<dbReference type="FunFam" id="1.10.1130.10:FF:000002">
    <property type="entry name" value="Cytochrome c-552"/>
    <property type="match status" value="1"/>
</dbReference>
<dbReference type="FunFam" id="1.20.140.10:FF:000014">
    <property type="entry name" value="Cytochrome c-552"/>
    <property type="match status" value="1"/>
</dbReference>
<dbReference type="Gene3D" id="1.20.140.10">
    <property type="entry name" value="Butyryl-CoA Dehydrogenase, subunit A, domain 3"/>
    <property type="match status" value="1"/>
</dbReference>
<dbReference type="Gene3D" id="1.10.1130.10">
    <property type="entry name" value="Flavocytochrome C3, Chain A"/>
    <property type="match status" value="1"/>
</dbReference>
<dbReference type="HAMAP" id="MF_01182">
    <property type="entry name" value="Cytochrom_C552"/>
    <property type="match status" value="1"/>
</dbReference>
<dbReference type="InterPro" id="IPR003321">
    <property type="entry name" value="Cyt_c552"/>
</dbReference>
<dbReference type="InterPro" id="IPR017570">
    <property type="entry name" value="Cyt_c_NO2Rdtase_formate-dep"/>
</dbReference>
<dbReference type="InterPro" id="IPR036280">
    <property type="entry name" value="Multihaem_cyt_sf"/>
</dbReference>
<dbReference type="NCBIfam" id="TIGR03152">
    <property type="entry name" value="cyto_c552_HCOOH"/>
    <property type="match status" value="1"/>
</dbReference>
<dbReference type="NCBIfam" id="NF008339">
    <property type="entry name" value="PRK11125.1"/>
    <property type="match status" value="1"/>
</dbReference>
<dbReference type="PANTHER" id="PTHR30633:SF0">
    <property type="entry name" value="CYTOCHROME C-552"/>
    <property type="match status" value="1"/>
</dbReference>
<dbReference type="PANTHER" id="PTHR30633">
    <property type="entry name" value="CYTOCHROME C-552 RESPIRATORY NITRITE REDUCTASE"/>
    <property type="match status" value="1"/>
</dbReference>
<dbReference type="Pfam" id="PF02335">
    <property type="entry name" value="Cytochrom_C552"/>
    <property type="match status" value="1"/>
</dbReference>
<dbReference type="PIRSF" id="PIRSF000243">
    <property type="entry name" value="Cyt_c552"/>
    <property type="match status" value="1"/>
</dbReference>
<dbReference type="SUPFAM" id="SSF48695">
    <property type="entry name" value="Multiheme cytochromes"/>
    <property type="match status" value="1"/>
</dbReference>
<dbReference type="PROSITE" id="PS51008">
    <property type="entry name" value="MULTIHEME_CYTC"/>
    <property type="match status" value="1"/>
</dbReference>
<proteinExistence type="inferred from homology"/>
<reference key="1">
    <citation type="journal article" date="2003" name="Lancet">
        <title>Genome sequence of Vibrio parahaemolyticus: a pathogenic mechanism distinct from that of V. cholerae.</title>
        <authorList>
            <person name="Makino K."/>
            <person name="Oshima K."/>
            <person name="Kurokawa K."/>
            <person name="Yokoyama K."/>
            <person name="Uda T."/>
            <person name="Tagomori K."/>
            <person name="Iijima Y."/>
            <person name="Najima M."/>
            <person name="Nakano M."/>
            <person name="Yamashita A."/>
            <person name="Kubota Y."/>
            <person name="Kimura S."/>
            <person name="Yasunaga T."/>
            <person name="Honda T."/>
            <person name="Shinagawa H."/>
            <person name="Hattori M."/>
            <person name="Iida T."/>
        </authorList>
    </citation>
    <scope>NUCLEOTIDE SEQUENCE [LARGE SCALE GENOMIC DNA]</scope>
    <source>
        <strain>RIMD 2210633</strain>
    </source>
</reference>
<sequence length="475" mass="53262">MSIKHWMSAPIAVATLFASQLLLAGSVLAAENNDRLDPRNDAFEQKHPDQYHSWKATSESKHIEDALSEDPNMVILWAGYGFAKDYNKARGHFYALDDVRQTLRTGAPADENSGPMPMACWSCKSPDVARVIEERGEDGYFSGKWARLGSEIVNPIGCSDCHDTRSEKFNQGEPELALTRPYVERAFDVIGKNFDDQSRLDKQASVCAQCHVEYYFTGPTKAVKFPWDMGTTVGDMEKYYDALDFKDWTHAVSKAPMLKAQHPGFETWREGIHGKNKVVCVDCHMPKVTKADGTVYTDHKVGNPFDRFEDTCAQCHTQTKEQLRNIVSSRKALVLNMKLTAEKQIVAAHFEAGEAWKAGATEEEMKPILQDIRHAQWRWDYAIASHGVHMHAPEVALEVLGTAVDRAADARTKLVRLLATKGITEPVQIPDISTKAKAQEALGMDMEKMNADKKHFLDTVVPDWDKAAAEREATY</sequence>
<comment type="function">
    <text evidence="1">Catalyzes the reduction of nitrite to ammonia, consuming six electrons in the process.</text>
</comment>
<comment type="catalytic activity">
    <reaction evidence="1">
        <text>6 Fe(III)-[cytochrome c] + NH4(+) + 2 H2O = 6 Fe(II)-[cytochrome c] + nitrite + 8 H(+)</text>
        <dbReference type="Rhea" id="RHEA:13089"/>
        <dbReference type="Rhea" id="RHEA-COMP:10350"/>
        <dbReference type="Rhea" id="RHEA-COMP:14399"/>
        <dbReference type="ChEBI" id="CHEBI:15377"/>
        <dbReference type="ChEBI" id="CHEBI:15378"/>
        <dbReference type="ChEBI" id="CHEBI:16301"/>
        <dbReference type="ChEBI" id="CHEBI:28938"/>
        <dbReference type="ChEBI" id="CHEBI:29033"/>
        <dbReference type="ChEBI" id="CHEBI:29034"/>
        <dbReference type="EC" id="1.7.2.2"/>
    </reaction>
</comment>
<comment type="cofactor">
    <cofactor evidence="1">
        <name>Ca(2+)</name>
        <dbReference type="ChEBI" id="CHEBI:29108"/>
    </cofactor>
    <text evidence="1">Binds 1 Ca(2+) ion per monomer.</text>
</comment>
<comment type="cofactor">
    <cofactor evidence="1">
        <name>heme c</name>
        <dbReference type="ChEBI" id="CHEBI:61717"/>
    </cofactor>
    <text evidence="1">Binds 5 heme c groups covalently per monomer.</text>
</comment>
<comment type="pathway">
    <text evidence="1">Nitrogen metabolism; nitrate reduction (assimilation).</text>
</comment>
<comment type="subcellular location">
    <subcellularLocation>
        <location evidence="1">Periplasm</location>
    </subcellularLocation>
</comment>
<comment type="similarity">
    <text evidence="1">Belongs to the cytochrome c-552 family.</text>
</comment>
<organism>
    <name type="scientific">Vibrio parahaemolyticus serotype O3:K6 (strain RIMD 2210633)</name>
    <dbReference type="NCBI Taxonomy" id="223926"/>
    <lineage>
        <taxon>Bacteria</taxon>
        <taxon>Pseudomonadati</taxon>
        <taxon>Pseudomonadota</taxon>
        <taxon>Gammaproteobacteria</taxon>
        <taxon>Vibrionales</taxon>
        <taxon>Vibrionaceae</taxon>
        <taxon>Vibrio</taxon>
    </lineage>
</organism>
<feature type="signal peptide" evidence="1">
    <location>
        <begin position="1"/>
        <end position="29"/>
    </location>
</feature>
<feature type="chain" id="PRO_0000268982" description="Cytochrome c-552">
    <location>
        <begin position="30"/>
        <end position="475"/>
    </location>
</feature>
<feature type="region of interest" description="Disordered" evidence="2">
    <location>
        <begin position="38"/>
        <end position="57"/>
    </location>
</feature>
<feature type="binding site" description="axial binding residue" evidence="1">
    <location>
        <position position="92"/>
    </location>
    <ligand>
        <name>heme c</name>
        <dbReference type="ChEBI" id="CHEBI:61717"/>
        <label>3</label>
    </ligand>
    <ligandPart>
        <name>Fe</name>
        <dbReference type="ChEBI" id="CHEBI:18248"/>
    </ligandPart>
</feature>
<feature type="binding site" description="covalent" evidence="1">
    <location>
        <position position="120"/>
    </location>
    <ligand>
        <name>heme</name>
        <dbReference type="ChEBI" id="CHEBI:30413"/>
        <label>1</label>
    </ligand>
</feature>
<feature type="binding site" description="covalent" evidence="1">
    <location>
        <position position="123"/>
    </location>
    <ligand>
        <name>heme</name>
        <dbReference type="ChEBI" id="CHEBI:30413"/>
        <label>1</label>
    </ligand>
</feature>
<feature type="binding site" description="axial binding residue" evidence="1">
    <location>
        <position position="124"/>
    </location>
    <ligand>
        <name>heme</name>
        <dbReference type="ChEBI" id="CHEBI:30413"/>
        <label>1</label>
    </ligand>
    <ligandPart>
        <name>Fe</name>
        <dbReference type="ChEBI" id="CHEBI:18248"/>
    </ligandPart>
</feature>
<feature type="binding site" description="covalent" evidence="1">
    <location>
        <position position="158"/>
    </location>
    <ligand>
        <name>heme c</name>
        <dbReference type="ChEBI" id="CHEBI:61717"/>
        <label>2</label>
    </ligand>
</feature>
<feature type="binding site" description="covalent" evidence="1">
    <location>
        <position position="161"/>
    </location>
    <ligand>
        <name>heme c</name>
        <dbReference type="ChEBI" id="CHEBI:61717"/>
        <label>2</label>
    </ligand>
</feature>
<feature type="binding site" description="axial binding residue" evidence="1">
    <location>
        <position position="162"/>
    </location>
    <ligand>
        <name>heme c</name>
        <dbReference type="ChEBI" id="CHEBI:61717"/>
        <label>2</label>
    </ligand>
    <ligandPart>
        <name>Fe</name>
        <dbReference type="ChEBI" id="CHEBI:18248"/>
    </ligandPart>
</feature>
<feature type="binding site" description="covalent" evidence="1">
    <location>
        <position position="207"/>
    </location>
    <ligand>
        <name>heme c</name>
        <dbReference type="ChEBI" id="CHEBI:61717"/>
        <label>3</label>
    </ligand>
</feature>
<feature type="binding site" description="covalent" evidence="1">
    <location>
        <position position="210"/>
    </location>
    <ligand>
        <name>heme c</name>
        <dbReference type="ChEBI" id="CHEBI:61717"/>
        <label>3</label>
    </ligand>
</feature>
<feature type="binding site" description="axial binding residue" evidence="1">
    <location>
        <position position="211"/>
    </location>
    <ligand>
        <name>heme c</name>
        <dbReference type="ChEBI" id="CHEBI:61717"/>
        <label>3</label>
    </ligand>
    <ligandPart>
        <name>Fe</name>
        <dbReference type="ChEBI" id="CHEBI:18248"/>
    </ligandPart>
</feature>
<feature type="binding site" evidence="1">
    <location>
        <position position="213"/>
    </location>
    <ligand>
        <name>Ca(2+)</name>
        <dbReference type="ChEBI" id="CHEBI:29108"/>
    </ligand>
</feature>
<feature type="binding site" evidence="1">
    <location>
        <position position="214"/>
    </location>
    <ligand>
        <name>Ca(2+)</name>
        <dbReference type="ChEBI" id="CHEBI:29108"/>
    </ligand>
</feature>
<feature type="binding site" evidence="1">
    <location>
        <position position="214"/>
    </location>
    <ligand>
        <name>substrate</name>
    </ligand>
</feature>
<feature type="binding site" evidence="1">
    <location>
        <position position="259"/>
    </location>
    <ligand>
        <name>Ca(2+)</name>
        <dbReference type="ChEBI" id="CHEBI:29108"/>
    </ligand>
</feature>
<feature type="binding site" evidence="1">
    <location>
        <position position="261"/>
    </location>
    <ligand>
        <name>Ca(2+)</name>
        <dbReference type="ChEBI" id="CHEBI:29108"/>
    </ligand>
</feature>
<feature type="binding site" evidence="1">
    <location>
        <position position="262"/>
    </location>
    <ligand>
        <name>substrate</name>
    </ligand>
</feature>
<feature type="binding site" description="axial binding residue" evidence="1">
    <location>
        <position position="273"/>
    </location>
    <ligand>
        <name>heme c</name>
        <dbReference type="ChEBI" id="CHEBI:61717"/>
        <label>5</label>
    </ligand>
    <ligandPart>
        <name>Fe</name>
        <dbReference type="ChEBI" id="CHEBI:18248"/>
    </ligandPart>
</feature>
<feature type="binding site" description="covalent" evidence="1">
    <location>
        <position position="280"/>
    </location>
    <ligand>
        <name>heme c</name>
        <dbReference type="ChEBI" id="CHEBI:61717"/>
        <label>4</label>
    </ligand>
</feature>
<feature type="binding site" description="covalent" evidence="1">
    <location>
        <position position="283"/>
    </location>
    <ligand>
        <name>heme c</name>
        <dbReference type="ChEBI" id="CHEBI:61717"/>
        <label>4</label>
    </ligand>
</feature>
<feature type="binding site" description="axial binding residue" evidence="1">
    <location>
        <position position="284"/>
    </location>
    <ligand>
        <name>heme c</name>
        <dbReference type="ChEBI" id="CHEBI:61717"/>
        <label>4</label>
    </ligand>
    <ligandPart>
        <name>Fe</name>
        <dbReference type="ChEBI" id="CHEBI:18248"/>
    </ligandPart>
</feature>
<feature type="binding site" description="axial binding residue" evidence="1">
    <location>
        <position position="299"/>
    </location>
    <ligand>
        <name>heme c</name>
        <dbReference type="ChEBI" id="CHEBI:61717"/>
        <label>2</label>
    </ligand>
    <ligandPart>
        <name>Fe</name>
        <dbReference type="ChEBI" id="CHEBI:18248"/>
    </ligandPart>
</feature>
<feature type="binding site" description="covalent" evidence="1">
    <location>
        <position position="312"/>
    </location>
    <ligand>
        <name>heme c</name>
        <dbReference type="ChEBI" id="CHEBI:61717"/>
        <label>5</label>
    </ligand>
</feature>
<feature type="binding site" description="covalent" evidence="1">
    <location>
        <position position="315"/>
    </location>
    <ligand>
        <name>heme c</name>
        <dbReference type="ChEBI" id="CHEBI:61717"/>
        <label>5</label>
    </ligand>
</feature>
<feature type="binding site" description="axial binding residue" evidence="1">
    <location>
        <position position="316"/>
    </location>
    <ligand>
        <name>heme c</name>
        <dbReference type="ChEBI" id="CHEBI:61717"/>
        <label>5</label>
    </ligand>
    <ligandPart>
        <name>Fe</name>
        <dbReference type="ChEBI" id="CHEBI:18248"/>
    </ligandPart>
</feature>
<feature type="binding site" description="axial binding residue" evidence="1">
    <location>
        <position position="391"/>
    </location>
    <ligand>
        <name>heme c</name>
        <dbReference type="ChEBI" id="CHEBI:61717"/>
        <label>4</label>
    </ligand>
    <ligandPart>
        <name>Fe</name>
        <dbReference type="ChEBI" id="CHEBI:18248"/>
    </ligandPart>
</feature>
<keyword id="KW-0106">Calcium</keyword>
<keyword id="KW-0249">Electron transport</keyword>
<keyword id="KW-0349">Heme</keyword>
<keyword id="KW-0408">Iron</keyword>
<keyword id="KW-0479">Metal-binding</keyword>
<keyword id="KW-0560">Oxidoreductase</keyword>
<keyword id="KW-0574">Periplasm</keyword>
<keyword id="KW-0732">Signal</keyword>
<keyword id="KW-0813">Transport</keyword>
<name>NRFA_VIBPA</name>
<protein>
    <recommendedName>
        <fullName evidence="1">Cytochrome c-552</fullName>
        <ecNumber evidence="1">1.7.2.2</ecNumber>
    </recommendedName>
    <alternativeName>
        <fullName evidence="1">Ammonia-forming cytochrome c nitrite reductase</fullName>
        <shortName evidence="1">Cytochrome c nitrite reductase</shortName>
    </alternativeName>
</protein>
<evidence type="ECO:0000255" key="1">
    <source>
        <dbReference type="HAMAP-Rule" id="MF_01182"/>
    </source>
</evidence>
<evidence type="ECO:0000256" key="2">
    <source>
        <dbReference type="SAM" id="MobiDB-lite"/>
    </source>
</evidence>
<accession>Q87ND9</accession>
<gene>
    <name evidence="1" type="primary">nrfA</name>
    <name type="ordered locus">VP1929</name>
</gene>